<proteinExistence type="evidence at transcript level"/>
<sequence length="410" mass="44936">MGSCSPQLPLICLSDQTLKPGSSKWVKVRSDVRKALEDYGCFEAKIDQVSMELQGSVLKAMQELFALPTEAKQRNVCPKPFAGYFSHNGLSESFGIKDANILEKAHEFTQQLWPEGNKSIKMIQLYAEKLAELDMMVRRLILESYGIEYFIDEHLNSTYYRMRLMKYIARPDNDITAAVGANVDNGANDNADGDANVNDDGASIGVKVNVDVGDDVNDNDSVNIGVGVDINVETNVNGHLDAEANGDATAWVVGAVSGNASVGAKEANVDAELGLPSHTDKSLSGIIYQHQIDGLEVKTKEGKWIRVKPAPNTVIFIAGDALCALMNGRIPSPYHRVRVTEKKKTRYAAALFSNPKEGYIIDSPKELVDEKHPRAFKPFDFVDLFNFYHTEAGRRAPSTLQAFCGVSAGK</sequence>
<dbReference type="EC" id="1.14.11.-"/>
<dbReference type="EMBL" id="AF418274">
    <property type="protein sequence ID" value="AAL14667.1"/>
    <property type="molecule type" value="mRNA"/>
</dbReference>
<dbReference type="SMR" id="Q944X7"/>
<dbReference type="HOGENOM" id="CLU_010119_3_0_1"/>
<dbReference type="ExpressionAtlas" id="Q944X7">
    <property type="expression patterns" value="baseline and differential"/>
</dbReference>
<dbReference type="GO" id="GO:0051213">
    <property type="term" value="F:dioxygenase activity"/>
    <property type="evidence" value="ECO:0007669"/>
    <property type="project" value="UniProtKB-KW"/>
</dbReference>
<dbReference type="GO" id="GO:0046872">
    <property type="term" value="F:metal ion binding"/>
    <property type="evidence" value="ECO:0007669"/>
    <property type="project" value="UniProtKB-KW"/>
</dbReference>
<dbReference type="FunFam" id="2.60.120.330:FF:000061">
    <property type="entry name" value="2-oxoglutarate-dependent dioxygenase AOP3"/>
    <property type="match status" value="1"/>
</dbReference>
<dbReference type="FunFam" id="2.60.120.330:FF:000062">
    <property type="entry name" value="2-oxoglutarate-dependent dioxygenase AOP3"/>
    <property type="match status" value="1"/>
</dbReference>
<dbReference type="Gene3D" id="2.60.120.330">
    <property type="entry name" value="B-lactam Antibiotic, Isopenicillin N Synthase, Chain"/>
    <property type="match status" value="2"/>
</dbReference>
<dbReference type="InterPro" id="IPR026992">
    <property type="entry name" value="DIOX_N"/>
</dbReference>
<dbReference type="InterPro" id="IPR044861">
    <property type="entry name" value="IPNS-like_FE2OG_OXY"/>
</dbReference>
<dbReference type="InterPro" id="IPR027443">
    <property type="entry name" value="IPNS-like_sf"/>
</dbReference>
<dbReference type="InterPro" id="IPR050231">
    <property type="entry name" value="Iron_ascorbate_oxido_reductase"/>
</dbReference>
<dbReference type="InterPro" id="IPR005123">
    <property type="entry name" value="Oxoglu/Fe-dep_dioxygenase_dom"/>
</dbReference>
<dbReference type="PANTHER" id="PTHR47990">
    <property type="entry name" value="2-OXOGLUTARATE (2OG) AND FE(II)-DEPENDENT OXYGENASE SUPERFAMILY PROTEIN-RELATED"/>
    <property type="match status" value="1"/>
</dbReference>
<dbReference type="Pfam" id="PF03171">
    <property type="entry name" value="2OG-FeII_Oxy"/>
    <property type="match status" value="1"/>
</dbReference>
<dbReference type="Pfam" id="PF14226">
    <property type="entry name" value="DIOX_N"/>
    <property type="match status" value="1"/>
</dbReference>
<dbReference type="SUPFAM" id="SSF51197">
    <property type="entry name" value="Clavaminate synthase-like"/>
    <property type="match status" value="1"/>
</dbReference>
<dbReference type="PROSITE" id="PS51471">
    <property type="entry name" value="FE2OG_OXY"/>
    <property type="match status" value="1"/>
</dbReference>
<evidence type="ECO:0000255" key="1">
    <source>
        <dbReference type="PROSITE-ProRule" id="PRU00805"/>
    </source>
</evidence>
<evidence type="ECO:0000269" key="2">
    <source>
    </source>
</evidence>
<evidence type="ECO:0000305" key="3"/>
<evidence type="ECO:0000305" key="4">
    <source>
    </source>
</evidence>
<feature type="chain" id="PRO_0000423938" description="2-oxoglutarate-dependent dioxygenase AOP3">
    <location>
        <begin position="1"/>
        <end position="410"/>
    </location>
</feature>
<feature type="domain" description="Fe2OG dioxygenase" evidence="1">
    <location>
        <begin position="258"/>
        <end position="355"/>
    </location>
</feature>
<feature type="binding site" evidence="1">
    <location>
        <position position="278"/>
    </location>
    <ligand>
        <name>Fe cation</name>
        <dbReference type="ChEBI" id="CHEBI:24875"/>
    </ligand>
</feature>
<feature type="binding site" evidence="1">
    <location>
        <position position="280"/>
    </location>
    <ligand>
        <name>Fe cation</name>
        <dbReference type="ChEBI" id="CHEBI:24875"/>
    </ligand>
</feature>
<feature type="binding site" evidence="1">
    <location>
        <position position="335"/>
    </location>
    <ligand>
        <name>Fe cation</name>
        <dbReference type="ChEBI" id="CHEBI:24875"/>
    </ligand>
</feature>
<feature type="binding site" evidence="1">
    <location>
        <position position="346"/>
    </location>
    <ligand>
        <name>2-oxoglutarate</name>
        <dbReference type="ChEBI" id="CHEBI:16810"/>
    </ligand>
</feature>
<accession>Q944X7</accession>
<organism>
    <name type="scientific">Arabidopsis thaliana</name>
    <name type="common">Mouse-ear cress</name>
    <dbReference type="NCBI Taxonomy" id="3702"/>
    <lineage>
        <taxon>Eukaryota</taxon>
        <taxon>Viridiplantae</taxon>
        <taxon>Streptophyta</taxon>
        <taxon>Embryophyta</taxon>
        <taxon>Tracheophyta</taxon>
        <taxon>Spermatophyta</taxon>
        <taxon>Magnoliopsida</taxon>
        <taxon>eudicotyledons</taxon>
        <taxon>Gunneridae</taxon>
        <taxon>Pentapetalae</taxon>
        <taxon>rosids</taxon>
        <taxon>malvids</taxon>
        <taxon>Brassicales</taxon>
        <taxon>Brassicaceae</taxon>
        <taxon>Camelineae</taxon>
        <taxon>Arabidopsis</taxon>
    </lineage>
</organism>
<keyword id="KW-0223">Dioxygenase</keyword>
<keyword id="KW-0408">Iron</keyword>
<keyword id="KW-0479">Metal-binding</keyword>
<keyword id="KW-0560">Oxidoreductase</keyword>
<comment type="function">
    <text evidence="2">2-oxoglutarate-dependent dioxygenase involved in glucosinolates biosynthesis. Catalyzes the conversion of methylsulfinylalkyl glucosinolates to hydroxyalkyl glucosinolates.</text>
</comment>
<comment type="cofactor">
    <cofactor evidence="1">
        <name>Fe(2+)</name>
        <dbReference type="ChEBI" id="CHEBI:29033"/>
    </cofactor>
    <text evidence="1">Binds 1 Fe(2+) ion per subunit.</text>
</comment>
<comment type="similarity">
    <text evidence="3">Belongs to the iron/ascorbate-dependent oxidoreductase family.</text>
</comment>
<comment type="caution">
    <text evidence="4">AOP1, AOP2 and AOP3 are found in tandem and inverted duplications on chromosome IV and encode 2-oxoglutarate-dependent dioxygenases involved in glucosinolates biosynthesis. In cv. Columbia, AOP2 (AC Q9ZTA2) cDNA contains a 5-bp deletion that leads to a non-functional protein and AOP3 (AC Q9ZTA1) is not expressed. The functional and expressed alleles for AOP2 (AC Q945B5) and AOP3 (AC Q945B4) are found in cv. Cvi and cv. Landsberg erecta, respectively. No ecotype coexpresses both AOP2 and AOP3 genes. The catalytic role of AOP1 is still uncertain (PubMed:11251105).</text>
</comment>
<protein>
    <recommendedName>
        <fullName>2-oxoglutarate-dependent dioxygenase AOP3</fullName>
        <ecNumber>1.14.11.-</ecNumber>
    </recommendedName>
</protein>
<reference key="1">
    <citation type="journal article" date="2001" name="Plant Cell">
        <title>Gene duplication in the diversification of secondary metabolism: tandem 2-oxoglutarate-dependent dioxygenases control glucosinolate biosynthesis in Arabidopsis.</title>
        <authorList>
            <person name="Kliebenstein D.J."/>
            <person name="Lambrix V.M."/>
            <person name="Reichelt M."/>
            <person name="Gershenzon J."/>
            <person name="Mitchell-Olds T."/>
        </authorList>
    </citation>
    <scope>NUCLEOTIDE SEQUENCE [MRNA]</scope>
    <scope>FUNCTION</scope>
    <source>
        <strain>cv. Cvi-0</strain>
    </source>
</reference>
<name>AOP3V_ARATH</name>
<gene>
    <name type="primary">AOP3</name>
</gene>